<keyword id="KW-0028">Amino-acid biosynthesis</keyword>
<keyword id="KW-0963">Cytoplasm</keyword>
<keyword id="KW-0521">NADP</keyword>
<keyword id="KW-0560">Oxidoreductase</keyword>
<keyword id="KW-0641">Proline biosynthesis</keyword>
<keyword id="KW-1185">Reference proteome</keyword>
<feature type="chain" id="PRO_0000230008" description="Gamma-glutamyl phosphate reductase">
    <location>
        <begin position="1"/>
        <end position="421"/>
    </location>
</feature>
<protein>
    <recommendedName>
        <fullName evidence="1">Gamma-glutamyl phosphate reductase</fullName>
        <shortName evidence="1">GPR</shortName>
        <ecNumber evidence="1">1.2.1.41</ecNumber>
    </recommendedName>
    <alternativeName>
        <fullName evidence="1">Glutamate-5-semialdehyde dehydrogenase</fullName>
    </alternativeName>
    <alternativeName>
        <fullName evidence="1">Glutamyl-gamma-semialdehyde dehydrogenase</fullName>
        <shortName evidence="1">GSA dehydrogenase</shortName>
    </alternativeName>
</protein>
<organism>
    <name type="scientific">Nitrosospira multiformis (strain ATCC 25196 / NCIMB 11849 / C 71)</name>
    <dbReference type="NCBI Taxonomy" id="323848"/>
    <lineage>
        <taxon>Bacteria</taxon>
        <taxon>Pseudomonadati</taxon>
        <taxon>Pseudomonadota</taxon>
        <taxon>Betaproteobacteria</taxon>
        <taxon>Nitrosomonadales</taxon>
        <taxon>Nitrosomonadaceae</taxon>
        <taxon>Nitrosospira</taxon>
    </lineage>
</organism>
<accession>Q2YBP9</accession>
<reference key="1">
    <citation type="submission" date="2005-08" db="EMBL/GenBank/DDBJ databases">
        <title>Complete sequence of chromosome 1 of Nitrosospira multiformis ATCC 25196.</title>
        <authorList>
            <person name="Copeland A."/>
            <person name="Lucas S."/>
            <person name="Lapidus A."/>
            <person name="Barry K."/>
            <person name="Detter J.C."/>
            <person name="Glavina T."/>
            <person name="Hammon N."/>
            <person name="Israni S."/>
            <person name="Pitluck S."/>
            <person name="Chain P."/>
            <person name="Malfatti S."/>
            <person name="Shin M."/>
            <person name="Vergez L."/>
            <person name="Schmutz J."/>
            <person name="Larimer F."/>
            <person name="Land M."/>
            <person name="Hauser L."/>
            <person name="Kyrpides N."/>
            <person name="Lykidis A."/>
            <person name="Richardson P."/>
        </authorList>
    </citation>
    <scope>NUCLEOTIDE SEQUENCE [LARGE SCALE GENOMIC DNA]</scope>
    <source>
        <strain>ATCC 25196 / NCIMB 11849 / C 71</strain>
    </source>
</reference>
<name>PROA_NITMU</name>
<sequence>MDIIDIKTYMHSIGREARAASRLIAKAETAAKNRALTQMAVAIKRDEQQLLAANARDVENAKERGLEAAMIDRLTLTPKSVASMAEGLLQIAALADPVGEISDLNYRPSGIQVGKMRVPLGVIGIIYEARPNVTADAAGLCLKAGNAAILRGGSEAIYSNQAIAACVREGLKTAGLPETAIQVIETTDRAAVGELVTMKEFVDVIVPRGGKGLIERISNEARIPVIKHLDGVCHIYIDEEADQEKAIRVADNAKTQRYGTCNTLETLLVHENIAGEVLPPLCRIYLDKGVELRGDPASQAIIPEMKEAREEDWYTEYLAPVLSVRVVSSLDQAIEHITIYGSQHTDSIITENYSNARRFLREVDSSSVMVNASTRFADGFEYGLGAEIGISTDKLHARGPVGLEGLTSQKFIVLGDGHIRQ</sequence>
<proteinExistence type="inferred from homology"/>
<dbReference type="EC" id="1.2.1.41" evidence="1"/>
<dbReference type="EMBL" id="CP000103">
    <property type="protein sequence ID" value="ABB73822.1"/>
    <property type="molecule type" value="Genomic_DNA"/>
</dbReference>
<dbReference type="RefSeq" id="WP_011379876.1">
    <property type="nucleotide sequence ID" value="NC_007614.1"/>
</dbReference>
<dbReference type="SMR" id="Q2YBP9"/>
<dbReference type="STRING" id="323848.Nmul_A0514"/>
<dbReference type="KEGG" id="nmu:Nmul_A0514"/>
<dbReference type="eggNOG" id="COG0014">
    <property type="taxonomic scope" value="Bacteria"/>
</dbReference>
<dbReference type="HOGENOM" id="CLU_030231_0_0_4"/>
<dbReference type="OrthoDB" id="9809970at2"/>
<dbReference type="UniPathway" id="UPA00098">
    <property type="reaction ID" value="UER00360"/>
</dbReference>
<dbReference type="Proteomes" id="UP000002718">
    <property type="component" value="Chromosome"/>
</dbReference>
<dbReference type="GO" id="GO:0005737">
    <property type="term" value="C:cytoplasm"/>
    <property type="evidence" value="ECO:0007669"/>
    <property type="project" value="UniProtKB-SubCell"/>
</dbReference>
<dbReference type="GO" id="GO:0004350">
    <property type="term" value="F:glutamate-5-semialdehyde dehydrogenase activity"/>
    <property type="evidence" value="ECO:0007669"/>
    <property type="project" value="UniProtKB-UniRule"/>
</dbReference>
<dbReference type="GO" id="GO:0050661">
    <property type="term" value="F:NADP binding"/>
    <property type="evidence" value="ECO:0007669"/>
    <property type="project" value="InterPro"/>
</dbReference>
<dbReference type="GO" id="GO:0055129">
    <property type="term" value="P:L-proline biosynthetic process"/>
    <property type="evidence" value="ECO:0007669"/>
    <property type="project" value="UniProtKB-UniRule"/>
</dbReference>
<dbReference type="CDD" id="cd07079">
    <property type="entry name" value="ALDH_F18-19_ProA-GPR"/>
    <property type="match status" value="1"/>
</dbReference>
<dbReference type="FunFam" id="3.40.309.10:FF:000006">
    <property type="entry name" value="Gamma-glutamyl phosphate reductase"/>
    <property type="match status" value="1"/>
</dbReference>
<dbReference type="Gene3D" id="3.40.605.10">
    <property type="entry name" value="Aldehyde Dehydrogenase, Chain A, domain 1"/>
    <property type="match status" value="1"/>
</dbReference>
<dbReference type="Gene3D" id="3.40.309.10">
    <property type="entry name" value="Aldehyde Dehydrogenase, Chain A, domain 2"/>
    <property type="match status" value="1"/>
</dbReference>
<dbReference type="HAMAP" id="MF_00412">
    <property type="entry name" value="ProA"/>
    <property type="match status" value="1"/>
</dbReference>
<dbReference type="InterPro" id="IPR016161">
    <property type="entry name" value="Ald_DH/histidinol_DH"/>
</dbReference>
<dbReference type="InterPro" id="IPR016163">
    <property type="entry name" value="Ald_DH_C"/>
</dbReference>
<dbReference type="InterPro" id="IPR016162">
    <property type="entry name" value="Ald_DH_N"/>
</dbReference>
<dbReference type="InterPro" id="IPR015590">
    <property type="entry name" value="Aldehyde_DH_dom"/>
</dbReference>
<dbReference type="InterPro" id="IPR020593">
    <property type="entry name" value="G-glutamylP_reductase_CS"/>
</dbReference>
<dbReference type="InterPro" id="IPR012134">
    <property type="entry name" value="Glu-5-SA_DH"/>
</dbReference>
<dbReference type="InterPro" id="IPR000965">
    <property type="entry name" value="GPR_dom"/>
</dbReference>
<dbReference type="NCBIfam" id="NF001221">
    <property type="entry name" value="PRK00197.1"/>
    <property type="match status" value="1"/>
</dbReference>
<dbReference type="NCBIfam" id="TIGR00407">
    <property type="entry name" value="proA"/>
    <property type="match status" value="1"/>
</dbReference>
<dbReference type="PANTHER" id="PTHR11063:SF8">
    <property type="entry name" value="DELTA-1-PYRROLINE-5-CARBOXYLATE SYNTHASE"/>
    <property type="match status" value="1"/>
</dbReference>
<dbReference type="PANTHER" id="PTHR11063">
    <property type="entry name" value="GLUTAMATE SEMIALDEHYDE DEHYDROGENASE"/>
    <property type="match status" value="1"/>
</dbReference>
<dbReference type="Pfam" id="PF00171">
    <property type="entry name" value="Aldedh"/>
    <property type="match status" value="2"/>
</dbReference>
<dbReference type="PIRSF" id="PIRSF000151">
    <property type="entry name" value="GPR"/>
    <property type="match status" value="1"/>
</dbReference>
<dbReference type="SUPFAM" id="SSF53720">
    <property type="entry name" value="ALDH-like"/>
    <property type="match status" value="1"/>
</dbReference>
<dbReference type="PROSITE" id="PS01223">
    <property type="entry name" value="PROA"/>
    <property type="match status" value="1"/>
</dbReference>
<comment type="function">
    <text evidence="1">Catalyzes the NADPH-dependent reduction of L-glutamate 5-phosphate into L-glutamate 5-semialdehyde and phosphate. The product spontaneously undergoes cyclization to form 1-pyrroline-5-carboxylate.</text>
</comment>
<comment type="catalytic activity">
    <reaction evidence="1">
        <text>L-glutamate 5-semialdehyde + phosphate + NADP(+) = L-glutamyl 5-phosphate + NADPH + H(+)</text>
        <dbReference type="Rhea" id="RHEA:19541"/>
        <dbReference type="ChEBI" id="CHEBI:15378"/>
        <dbReference type="ChEBI" id="CHEBI:43474"/>
        <dbReference type="ChEBI" id="CHEBI:57783"/>
        <dbReference type="ChEBI" id="CHEBI:58066"/>
        <dbReference type="ChEBI" id="CHEBI:58274"/>
        <dbReference type="ChEBI" id="CHEBI:58349"/>
        <dbReference type="EC" id="1.2.1.41"/>
    </reaction>
</comment>
<comment type="pathway">
    <text evidence="1">Amino-acid biosynthesis; L-proline biosynthesis; L-glutamate 5-semialdehyde from L-glutamate: step 2/2.</text>
</comment>
<comment type="subcellular location">
    <subcellularLocation>
        <location evidence="1">Cytoplasm</location>
    </subcellularLocation>
</comment>
<comment type="similarity">
    <text evidence="1">Belongs to the gamma-glutamyl phosphate reductase family.</text>
</comment>
<evidence type="ECO:0000255" key="1">
    <source>
        <dbReference type="HAMAP-Rule" id="MF_00412"/>
    </source>
</evidence>
<gene>
    <name evidence="1" type="primary">proA</name>
    <name type="ordered locus">Nmul_A0514</name>
</gene>